<sequence length="593" mass="63586">MTGLLKRKFDQLDEDNSSVSSSSSSSSSSSGCQSLSCSPSSSVSRASDSEEEGPWDQMPLPDRDFCSPRSFTPLSILKRARRERPGRVAFDGITVFYFPRCQGFTSVPSRGGCTLGMAPRHSACRRFSLAEFAQEQARARHEKLRQRLKEEKLEMLQWKLSAAGAPKAEAGLPPAVDAIDDASVEEDLAVAVAGGRLEEVSFLQPYPARRRRALLRASGVRRIDREEKRELQALRQSREDCGCHCDRICDPETCSCSLAGIKCQMDHTAFPCGCCREGCENPMGRVEFNQARVQTHFIHTLTRLQLEQEAESFRELEAPAQGSPPSPGEEALVPTFPLAKPPMNNELGDNSCSSDMTDSSTASSSASGTSGAPDCPTHPGLPGPGFQPGVDDDSLARILSFSDSDFGGEEEEEEEGSVGNLDNLSCFHPADIFGTSDPGGLASWTHSYSGCSFTSGILDENANLDASCFLNGGLEGSREGSLPGTSVPPSMDAGQSSSVDLSLSSCDSFELLQALPDYSLGPHYTSQKVSDSLDNIEAPHFPLPGLSPPGDASSCFLESLMGFSEPAAEALDPFIDSQFEDTVPASLMEPVPV</sequence>
<proteinExistence type="evidence at transcript level"/>
<name>CSRN1_PONAB</name>
<protein>
    <recommendedName>
        <fullName>Cysteine/serine-rich nuclear protein 1</fullName>
        <shortName>CSRNP-1</shortName>
    </recommendedName>
    <alternativeName>
        <fullName>Axin-1 up-regulated gene 1 protein</fullName>
    </alternativeName>
</protein>
<gene>
    <name type="primary">CSRNP1</name>
    <name type="synonym">AXUD1</name>
</gene>
<accession>Q5R638</accession>
<feature type="chain" id="PRO_0000290119" description="Cysteine/serine-rich nuclear protein 1">
    <location>
        <begin position="1"/>
        <end position="593"/>
    </location>
</feature>
<feature type="region of interest" description="Disordered" evidence="2">
    <location>
        <begin position="1"/>
        <end position="66"/>
    </location>
</feature>
<feature type="region of interest" description="Disordered" evidence="2">
    <location>
        <begin position="313"/>
        <end position="392"/>
    </location>
</feature>
<feature type="region of interest" description="Disordered" evidence="2">
    <location>
        <begin position="478"/>
        <end position="497"/>
    </location>
</feature>
<feature type="compositionally biased region" description="Low complexity" evidence="2">
    <location>
        <begin position="17"/>
        <end position="46"/>
    </location>
</feature>
<feature type="compositionally biased region" description="Low complexity" evidence="2">
    <location>
        <begin position="351"/>
        <end position="372"/>
    </location>
</feature>
<dbReference type="EMBL" id="CR860658">
    <property type="protein sequence ID" value="CAH92778.1"/>
    <property type="molecule type" value="mRNA"/>
</dbReference>
<dbReference type="RefSeq" id="NP_001126620.1">
    <property type="nucleotide sequence ID" value="NM_001133148.1"/>
</dbReference>
<dbReference type="RefSeq" id="XP_054406331.2">
    <property type="nucleotide sequence ID" value="XM_054550356.2"/>
</dbReference>
<dbReference type="RefSeq" id="XP_054406332.2">
    <property type="nucleotide sequence ID" value="XM_054550357.2"/>
</dbReference>
<dbReference type="FunCoup" id="Q5R638">
    <property type="interactions" value="785"/>
</dbReference>
<dbReference type="STRING" id="9601.ENSPPYP00000015657"/>
<dbReference type="GeneID" id="100173617"/>
<dbReference type="KEGG" id="pon:100173617"/>
<dbReference type="CTD" id="64651"/>
<dbReference type="eggNOG" id="KOG3813">
    <property type="taxonomic scope" value="Eukaryota"/>
</dbReference>
<dbReference type="InParanoid" id="Q5R638"/>
<dbReference type="OrthoDB" id="5946974at2759"/>
<dbReference type="Proteomes" id="UP000001595">
    <property type="component" value="Unplaced"/>
</dbReference>
<dbReference type="GO" id="GO:0005634">
    <property type="term" value="C:nucleus"/>
    <property type="evidence" value="ECO:0007669"/>
    <property type="project" value="UniProtKB-SubCell"/>
</dbReference>
<dbReference type="GO" id="GO:0000981">
    <property type="term" value="F:DNA-binding transcription factor activity, RNA polymerase II-specific"/>
    <property type="evidence" value="ECO:0007669"/>
    <property type="project" value="TreeGrafter"/>
</dbReference>
<dbReference type="GO" id="GO:0043565">
    <property type="term" value="F:sequence-specific DNA binding"/>
    <property type="evidence" value="ECO:0007669"/>
    <property type="project" value="TreeGrafter"/>
</dbReference>
<dbReference type="GO" id="GO:0006915">
    <property type="term" value="P:apoptotic process"/>
    <property type="evidence" value="ECO:0007669"/>
    <property type="project" value="UniProtKB-KW"/>
</dbReference>
<dbReference type="InterPro" id="IPR031972">
    <property type="entry name" value="CSRNP_N"/>
</dbReference>
<dbReference type="InterPro" id="IPR023260">
    <property type="entry name" value="Cys/Ser-rich_nuc_prot"/>
</dbReference>
<dbReference type="PANTHER" id="PTHR13580:SF10">
    <property type="entry name" value="CYSTEINE_SERINE-RICH NUCLEAR PROTEIN 1"/>
    <property type="match status" value="1"/>
</dbReference>
<dbReference type="PANTHER" id="PTHR13580">
    <property type="entry name" value="TGF-BETA INDUCED APOPTOSIS PROTEIN"/>
    <property type="match status" value="1"/>
</dbReference>
<dbReference type="Pfam" id="PF16019">
    <property type="entry name" value="CSRNP_N"/>
    <property type="match status" value="1"/>
</dbReference>
<dbReference type="PRINTS" id="PR02031">
    <property type="entry name" value="CYSSERRICHNP"/>
</dbReference>
<keyword id="KW-0010">Activator</keyword>
<keyword id="KW-0053">Apoptosis</keyword>
<keyword id="KW-0238">DNA-binding</keyword>
<keyword id="KW-0539">Nucleus</keyword>
<keyword id="KW-1185">Reference proteome</keyword>
<keyword id="KW-0804">Transcription</keyword>
<keyword id="KW-0805">Transcription regulation</keyword>
<evidence type="ECO:0000250" key="1"/>
<evidence type="ECO:0000256" key="2">
    <source>
        <dbReference type="SAM" id="MobiDB-lite"/>
    </source>
</evidence>
<evidence type="ECO:0000305" key="3"/>
<comment type="function">
    <text evidence="1">Binds to the consensus sequence 5'-AGAGTG-3' and has transcriptional activator activity. May have a tumor-suppressor function. May play a role in apoptosis (By similarity).</text>
</comment>
<comment type="subcellular location">
    <subcellularLocation>
        <location evidence="1">Nucleus</location>
    </subcellularLocation>
</comment>
<comment type="similarity">
    <text evidence="3">Belongs to the AXUD1 family.</text>
</comment>
<reference key="1">
    <citation type="submission" date="2004-11" db="EMBL/GenBank/DDBJ databases">
        <authorList>
            <consortium name="The German cDNA consortium"/>
        </authorList>
    </citation>
    <scope>NUCLEOTIDE SEQUENCE [LARGE SCALE MRNA]</scope>
    <source>
        <tissue>Brain cortex</tissue>
    </source>
</reference>
<organism>
    <name type="scientific">Pongo abelii</name>
    <name type="common">Sumatran orangutan</name>
    <name type="synonym">Pongo pygmaeus abelii</name>
    <dbReference type="NCBI Taxonomy" id="9601"/>
    <lineage>
        <taxon>Eukaryota</taxon>
        <taxon>Metazoa</taxon>
        <taxon>Chordata</taxon>
        <taxon>Craniata</taxon>
        <taxon>Vertebrata</taxon>
        <taxon>Euteleostomi</taxon>
        <taxon>Mammalia</taxon>
        <taxon>Eutheria</taxon>
        <taxon>Euarchontoglires</taxon>
        <taxon>Primates</taxon>
        <taxon>Haplorrhini</taxon>
        <taxon>Catarrhini</taxon>
        <taxon>Hominidae</taxon>
        <taxon>Pongo</taxon>
    </lineage>
</organism>